<feature type="chain" id="PRO_0000150797" description="Olfactory receptor 56B2">
    <location>
        <begin position="1"/>
        <end position="316"/>
    </location>
</feature>
<feature type="topological domain" description="Extracellular" evidence="1">
    <location>
        <begin position="1"/>
        <end position="32"/>
    </location>
</feature>
<feature type="transmembrane region" description="Helical; Name=1" evidence="1">
    <location>
        <begin position="33"/>
        <end position="53"/>
    </location>
</feature>
<feature type="topological domain" description="Cytoplasmic" evidence="1">
    <location>
        <begin position="54"/>
        <end position="61"/>
    </location>
</feature>
<feature type="transmembrane region" description="Helical; Name=2" evidence="1">
    <location>
        <begin position="62"/>
        <end position="82"/>
    </location>
</feature>
<feature type="topological domain" description="Extracellular" evidence="1">
    <location>
        <begin position="83"/>
        <end position="106"/>
    </location>
</feature>
<feature type="transmembrane region" description="Helical; Name=3" evidence="1">
    <location>
        <begin position="107"/>
        <end position="127"/>
    </location>
</feature>
<feature type="topological domain" description="Cytoplasmic" evidence="1">
    <location>
        <begin position="128"/>
        <end position="146"/>
    </location>
</feature>
<feature type="transmembrane region" description="Helical; Name=4" evidence="1">
    <location>
        <begin position="147"/>
        <end position="167"/>
    </location>
</feature>
<feature type="topological domain" description="Extracellular" evidence="1">
    <location>
        <begin position="168"/>
        <end position="203"/>
    </location>
</feature>
<feature type="transmembrane region" description="Helical; Name=5" evidence="1">
    <location>
        <begin position="204"/>
        <end position="224"/>
    </location>
</feature>
<feature type="topological domain" description="Cytoplasmic" evidence="1">
    <location>
        <begin position="225"/>
        <end position="244"/>
    </location>
</feature>
<feature type="transmembrane region" description="Helical; Name=6" evidence="1">
    <location>
        <begin position="245"/>
        <end position="265"/>
    </location>
</feature>
<feature type="topological domain" description="Extracellular" evidence="1">
    <location>
        <begin position="266"/>
        <end position="279"/>
    </location>
</feature>
<feature type="transmembrane region" description="Helical; Name=7" evidence="1">
    <location>
        <begin position="280"/>
        <end position="300"/>
    </location>
</feature>
<feature type="topological domain" description="Cytoplasmic" evidence="1">
    <location>
        <begin position="301"/>
        <end position="316"/>
    </location>
</feature>
<feature type="glycosylation site" description="N-linked (GlcNAc...) asparagine" evidence="1">
    <location>
        <position position="10"/>
    </location>
</feature>
<feature type="disulfide bond" evidence="2">
    <location>
        <begin position="104"/>
        <end position="196"/>
    </location>
</feature>
<feature type="sequence conflict" description="In Ref. 1; BAC06033." evidence="3" ref="1">
    <original>M</original>
    <variation>MLV</variation>
    <location>
        <position position="1"/>
    </location>
</feature>
<feature type="sequence conflict" description="In Ref. 1; BAC06033." evidence="3" ref="1">
    <original>E</original>
    <variation>GVKGT</variation>
    <location>
        <position position="316"/>
    </location>
</feature>
<evidence type="ECO:0000255" key="1"/>
<evidence type="ECO:0000255" key="2">
    <source>
        <dbReference type="PROSITE-ProRule" id="PRU00521"/>
    </source>
</evidence>
<evidence type="ECO:0000305" key="3"/>
<evidence type="ECO:0000312" key="4">
    <source>
        <dbReference type="HGNC" id="HGNC:15246"/>
    </source>
</evidence>
<accession>Q8NGI1</accession>
<accession>A0A6Q8PH80</accession>
<keyword id="KW-1003">Cell membrane</keyword>
<keyword id="KW-1015">Disulfide bond</keyword>
<keyword id="KW-0297">G-protein coupled receptor</keyword>
<keyword id="KW-0325">Glycoprotein</keyword>
<keyword id="KW-0472">Membrane</keyword>
<keyword id="KW-0552">Olfaction</keyword>
<keyword id="KW-0675">Receptor</keyword>
<keyword id="KW-1185">Reference proteome</keyword>
<keyword id="KW-0716">Sensory transduction</keyword>
<keyword id="KW-0807">Transducer</keyword>
<keyword id="KW-0812">Transmembrane</keyword>
<keyword id="KW-1133">Transmembrane helix</keyword>
<organism>
    <name type="scientific">Homo sapiens</name>
    <name type="common">Human</name>
    <dbReference type="NCBI Taxonomy" id="9606"/>
    <lineage>
        <taxon>Eukaryota</taxon>
        <taxon>Metazoa</taxon>
        <taxon>Chordata</taxon>
        <taxon>Craniata</taxon>
        <taxon>Vertebrata</taxon>
        <taxon>Euteleostomi</taxon>
        <taxon>Mammalia</taxon>
        <taxon>Eutheria</taxon>
        <taxon>Euarchontoglires</taxon>
        <taxon>Primates</taxon>
        <taxon>Haplorrhini</taxon>
        <taxon>Catarrhini</taxon>
        <taxon>Hominidae</taxon>
        <taxon>Homo</taxon>
    </lineage>
</organism>
<dbReference type="EMBL" id="AB065814">
    <property type="protein sequence ID" value="BAC06033.1"/>
    <property type="molecule type" value="Genomic_DNA"/>
</dbReference>
<dbReference type="EMBL" id="AC131574">
    <property type="status" value="NOT_ANNOTATED_CDS"/>
    <property type="molecule type" value="Genomic_DNA"/>
</dbReference>
<dbReference type="CCDS" id="CCDS91426.1"/>
<dbReference type="RefSeq" id="NP_001382986.1">
    <property type="nucleotide sequence ID" value="NM_001396057.1"/>
</dbReference>
<dbReference type="SMR" id="Q8NGI1"/>
<dbReference type="FunCoup" id="Q8NGI1">
    <property type="interactions" value="437"/>
</dbReference>
<dbReference type="IntAct" id="Q8NGI1">
    <property type="interactions" value="1"/>
</dbReference>
<dbReference type="GlyCosmos" id="Q8NGI1">
    <property type="glycosylation" value="1 site, No reported glycans"/>
</dbReference>
<dbReference type="GlyGen" id="Q8NGI1">
    <property type="glycosylation" value="1 site"/>
</dbReference>
<dbReference type="BioMuta" id="HGNC:15246"/>
<dbReference type="DMDM" id="38372699"/>
<dbReference type="jPOST" id="Q8NGI1"/>
<dbReference type="MassIVE" id="Q8NGI1"/>
<dbReference type="PeptideAtlas" id="Q8NGI1"/>
<dbReference type="ProteomicsDB" id="73518"/>
<dbReference type="Ensembl" id="ENST00000641377.2">
    <property type="protein sequence ID" value="ENSP00000502530.1"/>
    <property type="gene ID" value="ENSG00000181017.7"/>
</dbReference>
<dbReference type="GeneID" id="390073"/>
<dbReference type="MANE-Select" id="ENST00000641377.2">
    <property type="protein sequence ID" value="ENSP00000502530.1"/>
    <property type="RefSeq nucleotide sequence ID" value="NM_001396057.1"/>
    <property type="RefSeq protein sequence ID" value="NP_001382986.1"/>
</dbReference>
<dbReference type="AGR" id="HGNC:15246"/>
<dbReference type="GeneCards" id="OR56B2"/>
<dbReference type="HGNC" id="HGNC:15246">
    <property type="gene designation" value="OR56B2"/>
</dbReference>
<dbReference type="neXtProt" id="NX_Q8NGI1"/>
<dbReference type="GeneTree" id="ENSGT01130000278289"/>
<dbReference type="InParanoid" id="Q8NGI1"/>
<dbReference type="OMA" id="KATMFMA"/>
<dbReference type="OrthoDB" id="9881054at2759"/>
<dbReference type="PAN-GO" id="Q8NGI1">
    <property type="GO annotations" value="0 GO annotations based on evolutionary models"/>
</dbReference>
<dbReference type="PhylomeDB" id="Q8NGI1"/>
<dbReference type="PathwayCommons" id="Q8NGI1"/>
<dbReference type="Pharos" id="Q8NGI1">
    <property type="development level" value="Tdark"/>
</dbReference>
<dbReference type="Proteomes" id="UP000005640">
    <property type="component" value="Chromosome 11"/>
</dbReference>
<dbReference type="RNAct" id="Q8NGI1">
    <property type="molecule type" value="protein"/>
</dbReference>
<dbReference type="Bgee" id="ENSG00000181017">
    <property type="expression patterns" value="Expressed in mucosa of stomach and 7 other cell types or tissues"/>
</dbReference>
<dbReference type="GO" id="GO:0005886">
    <property type="term" value="C:plasma membrane"/>
    <property type="evidence" value="ECO:0000318"/>
    <property type="project" value="GO_Central"/>
</dbReference>
<dbReference type="GO" id="GO:0004930">
    <property type="term" value="F:G protein-coupled receptor activity"/>
    <property type="evidence" value="ECO:0007669"/>
    <property type="project" value="UniProtKB-KW"/>
</dbReference>
<dbReference type="GO" id="GO:0004984">
    <property type="term" value="F:olfactory receptor activity"/>
    <property type="evidence" value="ECO:0000318"/>
    <property type="project" value="GO_Central"/>
</dbReference>
<dbReference type="CDD" id="cd15223">
    <property type="entry name" value="7tmA_OR56-like"/>
    <property type="match status" value="1"/>
</dbReference>
<dbReference type="FunFam" id="1.20.1070.10:FF:000002">
    <property type="entry name" value="Olfactory receptor"/>
    <property type="match status" value="1"/>
</dbReference>
<dbReference type="Gene3D" id="1.20.1070.10">
    <property type="entry name" value="Rhodopsin 7-helix transmembrane proteins"/>
    <property type="match status" value="1"/>
</dbReference>
<dbReference type="InterPro" id="IPR000276">
    <property type="entry name" value="GPCR_Rhodpsn"/>
</dbReference>
<dbReference type="InterPro" id="IPR017452">
    <property type="entry name" value="GPCR_Rhodpsn_7TM"/>
</dbReference>
<dbReference type="InterPro" id="IPR000725">
    <property type="entry name" value="Olfact_rcpt"/>
</dbReference>
<dbReference type="InterPro" id="IPR050402">
    <property type="entry name" value="OR51/52/56-like"/>
</dbReference>
<dbReference type="PANTHER" id="PTHR26450">
    <property type="entry name" value="OLFACTORY RECEPTOR 56B1-RELATED"/>
    <property type="match status" value="1"/>
</dbReference>
<dbReference type="PANTHER" id="PTHR26450:SF26">
    <property type="entry name" value="OLFACTORY RECEPTOR 56B2-RELATED"/>
    <property type="match status" value="1"/>
</dbReference>
<dbReference type="Pfam" id="PF13853">
    <property type="entry name" value="7tm_4"/>
    <property type="match status" value="1"/>
</dbReference>
<dbReference type="PRINTS" id="PR00237">
    <property type="entry name" value="GPCRRHODOPSN"/>
</dbReference>
<dbReference type="PRINTS" id="PR00245">
    <property type="entry name" value="OLFACTORYR"/>
</dbReference>
<dbReference type="SUPFAM" id="SSF81321">
    <property type="entry name" value="Family A G protein-coupled receptor-like"/>
    <property type="match status" value="1"/>
</dbReference>
<dbReference type="PROSITE" id="PS50262">
    <property type="entry name" value="G_PROTEIN_RECEP_F1_2"/>
    <property type="match status" value="1"/>
</dbReference>
<protein>
    <recommendedName>
        <fullName>Olfactory receptor 56B2</fullName>
    </recommendedName>
</protein>
<gene>
    <name evidence="4" type="primary">OR56B2</name>
    <name type="synonym">OR56B2P</name>
</gene>
<sequence length="316" mass="35429">MVLQELRDSNSSKFQVSEFILMGFPGIHSWQHWLSLPLALLYLLALSANILILIIINKEAALHQPMYYFLGILAMADIGLATTIMPKILAILWFNAKTISLLECFAQMYAIHCFVAMESSTFVCMAIDRYVAICRPLRYPSIITESFVFKANGFMALRNSLCLISVPLLAAQRHYCSQNQIEHCLCSNLGVTSLSCDDRRINSINQVLLAWTLMGSDLGLIILSYALILYSVLKLNSPEAASKALSTCTSHLILILFFYTVIIVISITRSTGMRVPLIPVLLNVLHNVIPPALNPMVYALKNKELRQGLYKVLRLE</sequence>
<proteinExistence type="inferred from homology"/>
<reference key="1">
    <citation type="submission" date="2001-07" db="EMBL/GenBank/DDBJ databases">
        <title>Genome-wide discovery and analysis of human seven transmembrane helix receptor genes.</title>
        <authorList>
            <person name="Suwa M."/>
            <person name="Sato T."/>
            <person name="Okouchi I."/>
            <person name="Arita M."/>
            <person name="Futami K."/>
            <person name="Matsumoto S."/>
            <person name="Tsutsumi S."/>
            <person name="Aburatani H."/>
            <person name="Asai K."/>
            <person name="Akiyama Y."/>
        </authorList>
    </citation>
    <scope>NUCLEOTIDE SEQUENCE [GENOMIC DNA]</scope>
</reference>
<reference key="2">
    <citation type="journal article" date="2006" name="Nature">
        <title>Human chromosome 11 DNA sequence and analysis including novel gene identification.</title>
        <authorList>
            <person name="Taylor T.D."/>
            <person name="Noguchi H."/>
            <person name="Totoki Y."/>
            <person name="Toyoda A."/>
            <person name="Kuroki Y."/>
            <person name="Dewar K."/>
            <person name="Lloyd C."/>
            <person name="Itoh T."/>
            <person name="Takeda T."/>
            <person name="Kim D.-W."/>
            <person name="She X."/>
            <person name="Barlow K.F."/>
            <person name="Bloom T."/>
            <person name="Bruford E."/>
            <person name="Chang J.L."/>
            <person name="Cuomo C.A."/>
            <person name="Eichler E."/>
            <person name="FitzGerald M.G."/>
            <person name="Jaffe D.B."/>
            <person name="LaButti K."/>
            <person name="Nicol R."/>
            <person name="Park H.-S."/>
            <person name="Seaman C."/>
            <person name="Sougnez C."/>
            <person name="Yang X."/>
            <person name="Zimmer A.R."/>
            <person name="Zody M.C."/>
            <person name="Birren B.W."/>
            <person name="Nusbaum C."/>
            <person name="Fujiyama A."/>
            <person name="Hattori M."/>
            <person name="Rogers J."/>
            <person name="Lander E.S."/>
            <person name="Sakaki Y."/>
        </authorList>
    </citation>
    <scope>NUCLEOTIDE SEQUENCE [LARGE SCALE GENOMIC DNA]</scope>
</reference>
<comment type="function">
    <text evidence="3">Odorant receptor.</text>
</comment>
<comment type="subcellular location">
    <subcellularLocation>
        <location evidence="3">Cell membrane</location>
        <topology evidence="1">Multi-pass membrane protein</topology>
    </subcellularLocation>
</comment>
<comment type="similarity">
    <text evidence="2">Belongs to the G-protein coupled receptor 1 family.</text>
</comment>
<comment type="online information" name="Human Olfactory Receptor Data Exploratorium (HORDE)">
    <link uri="http://genome.weizmann.ac.il/horde/card/index/symbol:OR56B2P"/>
</comment>
<name>O56B2_HUMAN</name>